<comment type="function">
    <text evidence="1">Catalyzes the interconversion of 2-phosphoglycerate and 3-phosphoglycerate.</text>
</comment>
<comment type="catalytic activity">
    <reaction evidence="1">
        <text>(2R)-2-phosphoglycerate = (2R)-3-phosphoglycerate</text>
        <dbReference type="Rhea" id="RHEA:15901"/>
        <dbReference type="ChEBI" id="CHEBI:58272"/>
        <dbReference type="ChEBI" id="CHEBI:58289"/>
        <dbReference type="EC" id="5.4.2.11"/>
    </reaction>
</comment>
<comment type="pathway">
    <text evidence="1">Carbohydrate degradation; glycolysis; pyruvate from D-glyceraldehyde 3-phosphate: step 3/5.</text>
</comment>
<comment type="subunit">
    <text evidence="1">Homodimer.</text>
</comment>
<comment type="similarity">
    <text evidence="1">Belongs to the phosphoglycerate mutase family. BPG-dependent PGAM subfamily.</text>
</comment>
<gene>
    <name evidence="1" type="primary">gpmA</name>
    <name type="ordered locus">BUAP5A_298</name>
</gene>
<proteinExistence type="inferred from homology"/>
<dbReference type="EC" id="5.4.2.11" evidence="1"/>
<dbReference type="EMBL" id="CP001161">
    <property type="protein sequence ID" value="ACL30666.1"/>
    <property type="molecule type" value="Genomic_DNA"/>
</dbReference>
<dbReference type="RefSeq" id="WP_009874257.1">
    <property type="nucleotide sequence ID" value="NC_011833.1"/>
</dbReference>
<dbReference type="SMR" id="B8D995"/>
<dbReference type="KEGG" id="bap:BUAP5A_298"/>
<dbReference type="HOGENOM" id="CLU_033323_1_1_6"/>
<dbReference type="OrthoDB" id="9781415at2"/>
<dbReference type="UniPathway" id="UPA00109">
    <property type="reaction ID" value="UER00186"/>
</dbReference>
<dbReference type="Proteomes" id="UP000006904">
    <property type="component" value="Chromosome"/>
</dbReference>
<dbReference type="GO" id="GO:0004619">
    <property type="term" value="F:phosphoglycerate mutase activity"/>
    <property type="evidence" value="ECO:0007669"/>
    <property type="project" value="UniProtKB-EC"/>
</dbReference>
<dbReference type="GO" id="GO:0006094">
    <property type="term" value="P:gluconeogenesis"/>
    <property type="evidence" value="ECO:0007669"/>
    <property type="project" value="UniProtKB-UniRule"/>
</dbReference>
<dbReference type="GO" id="GO:0006096">
    <property type="term" value="P:glycolytic process"/>
    <property type="evidence" value="ECO:0007669"/>
    <property type="project" value="UniProtKB-UniRule"/>
</dbReference>
<dbReference type="CDD" id="cd07067">
    <property type="entry name" value="HP_PGM_like"/>
    <property type="match status" value="1"/>
</dbReference>
<dbReference type="FunFam" id="3.40.50.1240:FF:000003">
    <property type="entry name" value="2,3-bisphosphoglycerate-dependent phosphoglycerate mutase"/>
    <property type="match status" value="1"/>
</dbReference>
<dbReference type="Gene3D" id="3.40.50.1240">
    <property type="entry name" value="Phosphoglycerate mutase-like"/>
    <property type="match status" value="1"/>
</dbReference>
<dbReference type="HAMAP" id="MF_01039">
    <property type="entry name" value="PGAM_GpmA"/>
    <property type="match status" value="1"/>
</dbReference>
<dbReference type="InterPro" id="IPR013078">
    <property type="entry name" value="His_Pase_superF_clade-1"/>
</dbReference>
<dbReference type="InterPro" id="IPR029033">
    <property type="entry name" value="His_PPase_superfam"/>
</dbReference>
<dbReference type="InterPro" id="IPR001345">
    <property type="entry name" value="PG/BPGM_mutase_AS"/>
</dbReference>
<dbReference type="InterPro" id="IPR005952">
    <property type="entry name" value="Phosphogly_mut1"/>
</dbReference>
<dbReference type="NCBIfam" id="TIGR01258">
    <property type="entry name" value="pgm_1"/>
    <property type="match status" value="1"/>
</dbReference>
<dbReference type="NCBIfam" id="NF010713">
    <property type="entry name" value="PRK14115.1"/>
    <property type="match status" value="1"/>
</dbReference>
<dbReference type="PANTHER" id="PTHR11931">
    <property type="entry name" value="PHOSPHOGLYCERATE MUTASE"/>
    <property type="match status" value="1"/>
</dbReference>
<dbReference type="Pfam" id="PF00300">
    <property type="entry name" value="His_Phos_1"/>
    <property type="match status" value="2"/>
</dbReference>
<dbReference type="PIRSF" id="PIRSF000709">
    <property type="entry name" value="6PFK_2-Ptase"/>
    <property type="match status" value="1"/>
</dbReference>
<dbReference type="SMART" id="SM00855">
    <property type="entry name" value="PGAM"/>
    <property type="match status" value="1"/>
</dbReference>
<dbReference type="SUPFAM" id="SSF53254">
    <property type="entry name" value="Phosphoglycerate mutase-like"/>
    <property type="match status" value="1"/>
</dbReference>
<dbReference type="PROSITE" id="PS00175">
    <property type="entry name" value="PG_MUTASE"/>
    <property type="match status" value="1"/>
</dbReference>
<keyword id="KW-0312">Gluconeogenesis</keyword>
<keyword id="KW-0324">Glycolysis</keyword>
<keyword id="KW-0413">Isomerase</keyword>
<evidence type="ECO:0000255" key="1">
    <source>
        <dbReference type="HAMAP-Rule" id="MF_01039"/>
    </source>
</evidence>
<organism>
    <name type="scientific">Buchnera aphidicola subsp. Acyrthosiphon pisum (strain 5A)</name>
    <dbReference type="NCBI Taxonomy" id="563178"/>
    <lineage>
        <taxon>Bacteria</taxon>
        <taxon>Pseudomonadati</taxon>
        <taxon>Pseudomonadota</taxon>
        <taxon>Gammaproteobacteria</taxon>
        <taxon>Enterobacterales</taxon>
        <taxon>Erwiniaceae</taxon>
        <taxon>Buchnera</taxon>
    </lineage>
</organism>
<feature type="chain" id="PRO_1000149507" description="2,3-bisphosphoglycerate-dependent phosphoglycerate mutase">
    <location>
        <begin position="1"/>
        <end position="231"/>
    </location>
</feature>
<feature type="active site" description="Tele-phosphohistidine intermediate" evidence="1">
    <location>
        <position position="11"/>
    </location>
</feature>
<feature type="active site" description="Proton donor/acceptor" evidence="1">
    <location>
        <position position="89"/>
    </location>
</feature>
<feature type="binding site" evidence="1">
    <location>
        <begin position="10"/>
        <end position="17"/>
    </location>
    <ligand>
        <name>substrate</name>
    </ligand>
</feature>
<feature type="binding site" evidence="1">
    <location>
        <begin position="23"/>
        <end position="24"/>
    </location>
    <ligand>
        <name>substrate</name>
    </ligand>
</feature>
<feature type="binding site" evidence="1">
    <location>
        <position position="62"/>
    </location>
    <ligand>
        <name>substrate</name>
    </ligand>
</feature>
<feature type="binding site" evidence="1">
    <location>
        <begin position="89"/>
        <end position="92"/>
    </location>
    <ligand>
        <name>substrate</name>
    </ligand>
</feature>
<feature type="binding site" evidence="1">
    <location>
        <position position="100"/>
    </location>
    <ligand>
        <name>substrate</name>
    </ligand>
</feature>
<feature type="binding site" evidence="1">
    <location>
        <begin position="116"/>
        <end position="117"/>
    </location>
    <ligand>
        <name>substrate</name>
    </ligand>
</feature>
<feature type="binding site" evidence="1">
    <location>
        <begin position="185"/>
        <end position="186"/>
    </location>
    <ligand>
        <name>substrate</name>
    </ligand>
</feature>
<feature type="site" description="Transition state stabilizer" evidence="1">
    <location>
        <position position="184"/>
    </location>
</feature>
<name>GPMA_BUCA5</name>
<reference key="1">
    <citation type="journal article" date="2009" name="Science">
        <title>The dynamics and time scale of ongoing genomic erosion in symbiotic bacteria.</title>
        <authorList>
            <person name="Moran N.A."/>
            <person name="McLaughlin H.J."/>
            <person name="Sorek R."/>
        </authorList>
    </citation>
    <scope>NUCLEOTIDE SEQUENCE [LARGE SCALE GENOMIC DNA]</scope>
    <source>
        <strain>5A</strain>
    </source>
</reference>
<sequence>MKINQVVLIRHGQSEWNTLNKFTGWHDAELDKKGKDEAKFAAILLKKEKFFFDCAHTSLLKRAIHTLQYILDELNQTWLSVKKSWRLNERHYGALEGLNKDEVIEKYGQKQVLLWRRSFDISPPQINIKDKRFPGNDPRYSHLNIHDIPLGESLEKTAKRVIPYWNKIIYPELKNNKKILIVAHGNSLRALIQHLYKIDNKAILDLNIPTAQPIILDFDNEKNPIKWHYLT</sequence>
<accession>B8D995</accession>
<protein>
    <recommendedName>
        <fullName evidence="1">2,3-bisphosphoglycerate-dependent phosphoglycerate mutase</fullName>
        <shortName evidence="1">BPG-dependent PGAM</shortName>
        <shortName evidence="1">PGAM</shortName>
        <shortName evidence="1">Phosphoglyceromutase</shortName>
        <shortName evidence="1">dPGM</shortName>
        <ecNumber evidence="1">5.4.2.11</ecNumber>
    </recommendedName>
</protein>